<protein>
    <recommendedName>
        <fullName evidence="2">Small ribosomal subunit protein uS12cz/uS12cy</fullName>
    </recommendedName>
    <alternativeName>
        <fullName evidence="3">30S ribosomal protein S12, chloroplastic</fullName>
    </alternativeName>
</protein>
<organism>
    <name type="scientific">Calycanthus floridus var. glaucus</name>
    <name type="common">Eastern sweetshrub</name>
    <name type="synonym">Calycanthus fertilis var. ferax</name>
    <dbReference type="NCBI Taxonomy" id="212734"/>
    <lineage>
        <taxon>Eukaryota</taxon>
        <taxon>Viridiplantae</taxon>
        <taxon>Streptophyta</taxon>
        <taxon>Embryophyta</taxon>
        <taxon>Tracheophyta</taxon>
        <taxon>Spermatophyta</taxon>
        <taxon>Magnoliopsida</taxon>
        <taxon>Magnoliidae</taxon>
        <taxon>Laurales</taxon>
        <taxon>Calycanthaceae</taxon>
        <taxon>Calycanthus</taxon>
    </lineage>
</organism>
<accession>Q7Y677</accession>
<keyword id="KW-0150">Chloroplast</keyword>
<keyword id="KW-0934">Plastid</keyword>
<keyword id="KW-0687">Ribonucleoprotein</keyword>
<keyword id="KW-0689">Ribosomal protein</keyword>
<keyword id="KW-0694">RNA-binding</keyword>
<keyword id="KW-0699">rRNA-binding</keyword>
<reference key="1">
    <citation type="journal article" date="2003" name="Plant Syst. Evol.">
        <title>The chloroplast genome of the 'basal' angiosperm Calycanthus fertilis -- structural and phylogenetic analyses.</title>
        <authorList>
            <person name="Goremykin V."/>
            <person name="Hirsch-Ernst K.I."/>
            <person name="Woelfl S."/>
            <person name="Hellwig F.H."/>
        </authorList>
    </citation>
    <scope>NUCLEOTIDE SEQUENCE [LARGE SCALE GENOMIC DNA]</scope>
</reference>
<gene>
    <name type="primary">rps12-A</name>
</gene>
<gene>
    <name type="primary">rps12-B</name>
</gene>
<proteinExistence type="inferred from homology"/>
<name>RR12_CALFG</name>
<geneLocation type="chloroplast"/>
<dbReference type="EMBL" id="AJ428413">
    <property type="protein sequence ID" value="CAD28682.1"/>
    <property type="molecule type" value="Genomic_DNA"/>
</dbReference>
<dbReference type="EMBL" id="AJ428413">
    <property type="protein sequence ID" value="CAD28781.1"/>
    <property type="molecule type" value="Genomic_DNA"/>
</dbReference>
<dbReference type="SMR" id="Q7Y677"/>
<dbReference type="GO" id="GO:0009507">
    <property type="term" value="C:chloroplast"/>
    <property type="evidence" value="ECO:0007669"/>
    <property type="project" value="UniProtKB-SubCell"/>
</dbReference>
<dbReference type="GO" id="GO:0015935">
    <property type="term" value="C:small ribosomal subunit"/>
    <property type="evidence" value="ECO:0007669"/>
    <property type="project" value="InterPro"/>
</dbReference>
<dbReference type="GO" id="GO:0019843">
    <property type="term" value="F:rRNA binding"/>
    <property type="evidence" value="ECO:0007669"/>
    <property type="project" value="UniProtKB-UniRule"/>
</dbReference>
<dbReference type="GO" id="GO:0003735">
    <property type="term" value="F:structural constituent of ribosome"/>
    <property type="evidence" value="ECO:0007669"/>
    <property type="project" value="InterPro"/>
</dbReference>
<dbReference type="GO" id="GO:0006412">
    <property type="term" value="P:translation"/>
    <property type="evidence" value="ECO:0007669"/>
    <property type="project" value="UniProtKB-UniRule"/>
</dbReference>
<dbReference type="CDD" id="cd03368">
    <property type="entry name" value="Ribosomal_S12"/>
    <property type="match status" value="1"/>
</dbReference>
<dbReference type="FunFam" id="2.40.50.140:FF:000008">
    <property type="entry name" value="30S ribosomal protein S12, chloroplastic"/>
    <property type="match status" value="1"/>
</dbReference>
<dbReference type="Gene3D" id="2.40.50.140">
    <property type="entry name" value="Nucleic acid-binding proteins"/>
    <property type="match status" value="1"/>
</dbReference>
<dbReference type="HAMAP" id="MF_00403_B">
    <property type="entry name" value="Ribosomal_uS12_B"/>
    <property type="match status" value="1"/>
</dbReference>
<dbReference type="InterPro" id="IPR012340">
    <property type="entry name" value="NA-bd_OB-fold"/>
</dbReference>
<dbReference type="InterPro" id="IPR006032">
    <property type="entry name" value="Ribosomal_uS12"/>
</dbReference>
<dbReference type="InterPro" id="IPR005679">
    <property type="entry name" value="Ribosomal_uS12_bac"/>
</dbReference>
<dbReference type="NCBIfam" id="TIGR00981">
    <property type="entry name" value="rpsL_bact"/>
    <property type="match status" value="1"/>
</dbReference>
<dbReference type="PANTHER" id="PTHR11652">
    <property type="entry name" value="30S RIBOSOMAL PROTEIN S12 FAMILY MEMBER"/>
    <property type="match status" value="1"/>
</dbReference>
<dbReference type="Pfam" id="PF00164">
    <property type="entry name" value="Ribosom_S12_S23"/>
    <property type="match status" value="1"/>
</dbReference>
<dbReference type="PIRSF" id="PIRSF002133">
    <property type="entry name" value="Ribosomal_S12/S23"/>
    <property type="match status" value="1"/>
</dbReference>
<dbReference type="PRINTS" id="PR01034">
    <property type="entry name" value="RIBOSOMALS12"/>
</dbReference>
<dbReference type="SUPFAM" id="SSF50249">
    <property type="entry name" value="Nucleic acid-binding proteins"/>
    <property type="match status" value="1"/>
</dbReference>
<dbReference type="PROSITE" id="PS00055">
    <property type="entry name" value="RIBOSOMAL_S12"/>
    <property type="match status" value="1"/>
</dbReference>
<evidence type="ECO:0000250" key="1"/>
<evidence type="ECO:0000255" key="2">
    <source>
        <dbReference type="HAMAP-Rule" id="MF_00403"/>
    </source>
</evidence>
<evidence type="ECO:0000305" key="3"/>
<sequence length="123" mass="13738">MPTIKQLIRNTRQPIRNVTKSPALRGCPQRRGTCTRVYTITPKKPNSALRKVARVRLTSGFEITAYIPGIGHNSQEHSVVLVRGGRVKDLPGVRYHIVRGTLDAVGVKDRQQGRSKYGVKKPK</sequence>
<feature type="chain" id="PRO_0000146394" description="Small ribosomal subunit protein uS12cz/uS12cy">
    <location>
        <begin position="1"/>
        <end position="123"/>
    </location>
</feature>
<comment type="function">
    <text evidence="1">With S4 and S5 plays an important role in translational accuracy. Located at the interface of the 30S and 50S subunits (By similarity).</text>
</comment>
<comment type="subunit">
    <text evidence="1">Part of the 30S ribosomal subunit.</text>
</comment>
<comment type="subcellular location">
    <subcellularLocation>
        <location>Plastid</location>
        <location>Chloroplast</location>
    </subcellularLocation>
</comment>
<comment type="similarity">
    <text evidence="3">Belongs to the universal ribosomal protein uS12 family.</text>
</comment>